<evidence type="ECO:0000255" key="1">
    <source>
        <dbReference type="PROSITE-ProRule" id="PRU00325"/>
    </source>
</evidence>
<evidence type="ECO:0000256" key="2">
    <source>
        <dbReference type="SAM" id="MobiDB-lite"/>
    </source>
</evidence>
<evidence type="ECO:0000269" key="3">
    <source>
    </source>
</evidence>
<evidence type="ECO:0000305" key="4"/>
<organism>
    <name type="scientific">Arabidopsis thaliana</name>
    <name type="common">Mouse-ear cress</name>
    <dbReference type="NCBI Taxonomy" id="3702"/>
    <lineage>
        <taxon>Eukaryota</taxon>
        <taxon>Viridiplantae</taxon>
        <taxon>Streptophyta</taxon>
        <taxon>Embryophyta</taxon>
        <taxon>Tracheophyta</taxon>
        <taxon>Spermatophyta</taxon>
        <taxon>Magnoliopsida</taxon>
        <taxon>eudicotyledons</taxon>
        <taxon>Gunneridae</taxon>
        <taxon>Pentapetalae</taxon>
        <taxon>rosids</taxon>
        <taxon>malvids</taxon>
        <taxon>Brassicales</taxon>
        <taxon>Brassicaceae</taxon>
        <taxon>Camelineae</taxon>
        <taxon>Arabidopsis</taxon>
    </lineage>
</organism>
<proteinExistence type="evidence at protein level"/>
<accession>Q9SY66</accession>
<protein>
    <recommendedName>
        <fullName>Protein FAR1-RELATED SEQUENCE 11</fullName>
    </recommendedName>
</protein>
<reference key="1">
    <citation type="journal article" date="2000" name="Nature">
        <title>Sequence and analysis of chromosome 1 of the plant Arabidopsis thaliana.</title>
        <authorList>
            <person name="Theologis A."/>
            <person name="Ecker J.R."/>
            <person name="Palm C.J."/>
            <person name="Federspiel N.A."/>
            <person name="Kaul S."/>
            <person name="White O."/>
            <person name="Alonso J."/>
            <person name="Altafi H."/>
            <person name="Araujo R."/>
            <person name="Bowman C.L."/>
            <person name="Brooks S.Y."/>
            <person name="Buehler E."/>
            <person name="Chan A."/>
            <person name="Chao Q."/>
            <person name="Chen H."/>
            <person name="Cheuk R.F."/>
            <person name="Chin C.W."/>
            <person name="Chung M.K."/>
            <person name="Conn L."/>
            <person name="Conway A.B."/>
            <person name="Conway A.R."/>
            <person name="Creasy T.H."/>
            <person name="Dewar K."/>
            <person name="Dunn P."/>
            <person name="Etgu P."/>
            <person name="Feldblyum T.V."/>
            <person name="Feng J.-D."/>
            <person name="Fong B."/>
            <person name="Fujii C.Y."/>
            <person name="Gill J.E."/>
            <person name="Goldsmith A.D."/>
            <person name="Haas B."/>
            <person name="Hansen N.F."/>
            <person name="Hughes B."/>
            <person name="Huizar L."/>
            <person name="Hunter J.L."/>
            <person name="Jenkins J."/>
            <person name="Johnson-Hopson C."/>
            <person name="Khan S."/>
            <person name="Khaykin E."/>
            <person name="Kim C.J."/>
            <person name="Koo H.L."/>
            <person name="Kremenetskaia I."/>
            <person name="Kurtz D.B."/>
            <person name="Kwan A."/>
            <person name="Lam B."/>
            <person name="Langin-Hooper S."/>
            <person name="Lee A."/>
            <person name="Lee J.M."/>
            <person name="Lenz C.A."/>
            <person name="Li J.H."/>
            <person name="Li Y.-P."/>
            <person name="Lin X."/>
            <person name="Liu S.X."/>
            <person name="Liu Z.A."/>
            <person name="Luros J.S."/>
            <person name="Maiti R."/>
            <person name="Marziali A."/>
            <person name="Militscher J."/>
            <person name="Miranda M."/>
            <person name="Nguyen M."/>
            <person name="Nierman W.C."/>
            <person name="Osborne B.I."/>
            <person name="Pai G."/>
            <person name="Peterson J."/>
            <person name="Pham P.K."/>
            <person name="Rizzo M."/>
            <person name="Rooney T."/>
            <person name="Rowley D."/>
            <person name="Sakano H."/>
            <person name="Salzberg S.L."/>
            <person name="Schwartz J.R."/>
            <person name="Shinn P."/>
            <person name="Southwick A.M."/>
            <person name="Sun H."/>
            <person name="Tallon L.J."/>
            <person name="Tambunga G."/>
            <person name="Toriumi M.J."/>
            <person name="Town C.D."/>
            <person name="Utterback T."/>
            <person name="Van Aken S."/>
            <person name="Vaysberg M."/>
            <person name="Vysotskaia V.S."/>
            <person name="Walker M."/>
            <person name="Wu D."/>
            <person name="Yu G."/>
            <person name="Fraser C.M."/>
            <person name="Venter J.C."/>
            <person name="Davis R.W."/>
        </authorList>
    </citation>
    <scope>NUCLEOTIDE SEQUENCE [LARGE SCALE GENOMIC DNA]</scope>
    <source>
        <strain>cv. Columbia</strain>
    </source>
</reference>
<reference key="2">
    <citation type="journal article" date="2017" name="Plant J.">
        <title>Araport11: a complete reannotation of the Arabidopsis thaliana reference genome.</title>
        <authorList>
            <person name="Cheng C.Y."/>
            <person name="Krishnakumar V."/>
            <person name="Chan A.P."/>
            <person name="Thibaud-Nissen F."/>
            <person name="Schobel S."/>
            <person name="Town C.D."/>
        </authorList>
    </citation>
    <scope>GENOME REANNOTATION</scope>
    <source>
        <strain>cv. Columbia</strain>
    </source>
</reference>
<reference key="3">
    <citation type="journal article" date="2003" name="Science">
        <title>Empirical analysis of transcriptional activity in the Arabidopsis genome.</title>
        <authorList>
            <person name="Yamada K."/>
            <person name="Lim J."/>
            <person name="Dale J.M."/>
            <person name="Chen H."/>
            <person name="Shinn P."/>
            <person name="Palm C.J."/>
            <person name="Southwick A.M."/>
            <person name="Wu H.C."/>
            <person name="Kim C.J."/>
            <person name="Nguyen M."/>
            <person name="Pham P.K."/>
            <person name="Cheuk R.F."/>
            <person name="Karlin-Newmann G."/>
            <person name="Liu S.X."/>
            <person name="Lam B."/>
            <person name="Sakano H."/>
            <person name="Wu T."/>
            <person name="Yu G."/>
            <person name="Miranda M."/>
            <person name="Quach H.L."/>
            <person name="Tripp M."/>
            <person name="Chang C.H."/>
            <person name="Lee J.M."/>
            <person name="Toriumi M.J."/>
            <person name="Chan M.M."/>
            <person name="Tang C.C."/>
            <person name="Onodera C.S."/>
            <person name="Deng J.M."/>
            <person name="Akiyama K."/>
            <person name="Ansari Y."/>
            <person name="Arakawa T."/>
            <person name="Banh J."/>
            <person name="Banno F."/>
            <person name="Bowser L."/>
            <person name="Brooks S.Y."/>
            <person name="Carninci P."/>
            <person name="Chao Q."/>
            <person name="Choy N."/>
            <person name="Enju A."/>
            <person name="Goldsmith A.D."/>
            <person name="Gurjal M."/>
            <person name="Hansen N.F."/>
            <person name="Hayashizaki Y."/>
            <person name="Johnson-Hopson C."/>
            <person name="Hsuan V.W."/>
            <person name="Iida K."/>
            <person name="Karnes M."/>
            <person name="Khan S."/>
            <person name="Koesema E."/>
            <person name="Ishida J."/>
            <person name="Jiang P.X."/>
            <person name="Jones T."/>
            <person name="Kawai J."/>
            <person name="Kamiya A."/>
            <person name="Meyers C."/>
            <person name="Nakajima M."/>
            <person name="Narusaka M."/>
            <person name="Seki M."/>
            <person name="Sakurai T."/>
            <person name="Satou M."/>
            <person name="Tamse R."/>
            <person name="Vaysberg M."/>
            <person name="Wallender E.K."/>
            <person name="Wong C."/>
            <person name="Yamamura Y."/>
            <person name="Yuan S."/>
            <person name="Shinozaki K."/>
            <person name="Davis R.W."/>
            <person name="Theologis A."/>
            <person name="Ecker J.R."/>
        </authorList>
    </citation>
    <scope>NUCLEOTIDE SEQUENCE [LARGE SCALE MRNA]</scope>
    <source>
        <strain>cv. Columbia</strain>
    </source>
</reference>
<reference key="4">
    <citation type="journal article" date="2004" name="Plant Physiol.">
        <title>Arabidopsis FHY3/FAR1 gene family and distinct roles of its members in light control of Arabidopsis development.</title>
        <authorList>
            <person name="Lin R."/>
            <person name="Wang H."/>
        </authorList>
    </citation>
    <scope>TISSUE SPECIFICITY</scope>
    <scope>INDUCTION</scope>
    <scope>SUBCELLULAR LOCATION</scope>
    <scope>GENE FAMILY</scope>
    <scope>NOMENCLATURE</scope>
</reference>
<name>FRS11_ARATH</name>
<keyword id="KW-0479">Metal-binding</keyword>
<keyword id="KW-0539">Nucleus</keyword>
<keyword id="KW-1185">Reference proteome</keyword>
<keyword id="KW-0862">Zinc</keyword>
<keyword id="KW-0863">Zinc-finger</keyword>
<dbReference type="EMBL" id="AC005489">
    <property type="protein sequence ID" value="AAD32874.1"/>
    <property type="molecule type" value="Genomic_DNA"/>
</dbReference>
<dbReference type="EMBL" id="CP002684">
    <property type="protein sequence ID" value="AEE28558.1"/>
    <property type="molecule type" value="Genomic_DNA"/>
</dbReference>
<dbReference type="EMBL" id="CP002684">
    <property type="protein sequence ID" value="ANM59506.1"/>
    <property type="molecule type" value="Genomic_DNA"/>
</dbReference>
<dbReference type="EMBL" id="AF424595">
    <property type="protein sequence ID" value="AAL11589.1"/>
    <property type="molecule type" value="mRNA"/>
</dbReference>
<dbReference type="EMBL" id="BT000486">
    <property type="protein sequence ID" value="AAN18055.1"/>
    <property type="molecule type" value="mRNA"/>
</dbReference>
<dbReference type="RefSeq" id="NP_001321860.1">
    <property type="nucleotide sequence ID" value="NM_001331895.1"/>
</dbReference>
<dbReference type="RefSeq" id="NP_563865.1">
    <property type="nucleotide sequence ID" value="NM_100898.3"/>
</dbReference>
<dbReference type="BioGRID" id="22803">
    <property type="interactions" value="9"/>
</dbReference>
<dbReference type="FunCoup" id="Q9SY66">
    <property type="interactions" value="751"/>
</dbReference>
<dbReference type="IntAct" id="Q9SY66">
    <property type="interactions" value="9"/>
</dbReference>
<dbReference type="STRING" id="3702.Q9SY66"/>
<dbReference type="iPTMnet" id="Q9SY66"/>
<dbReference type="PaxDb" id="3702-AT1G10240.1"/>
<dbReference type="ProteomicsDB" id="228952"/>
<dbReference type="EnsemblPlants" id="AT1G10240.1">
    <property type="protein sequence ID" value="AT1G10240.1"/>
    <property type="gene ID" value="AT1G10240"/>
</dbReference>
<dbReference type="EnsemblPlants" id="AT1G10240.2">
    <property type="protein sequence ID" value="AT1G10240.2"/>
    <property type="gene ID" value="AT1G10240"/>
</dbReference>
<dbReference type="GeneID" id="837563"/>
<dbReference type="Gramene" id="AT1G10240.1">
    <property type="protein sequence ID" value="AT1G10240.1"/>
    <property type="gene ID" value="AT1G10240"/>
</dbReference>
<dbReference type="Gramene" id="AT1G10240.2">
    <property type="protein sequence ID" value="AT1G10240.2"/>
    <property type="gene ID" value="AT1G10240"/>
</dbReference>
<dbReference type="KEGG" id="ath:AT1G10240"/>
<dbReference type="Araport" id="AT1G10240"/>
<dbReference type="TAIR" id="AT1G10240">
    <property type="gene designation" value="FRS11"/>
</dbReference>
<dbReference type="eggNOG" id="ENOG502QQ3V">
    <property type="taxonomic scope" value="Eukaryota"/>
</dbReference>
<dbReference type="HOGENOM" id="CLU_008459_12_2_1"/>
<dbReference type="InParanoid" id="Q9SY66"/>
<dbReference type="OMA" id="TGEQQTM"/>
<dbReference type="PhylomeDB" id="Q9SY66"/>
<dbReference type="PRO" id="PR:Q9SY66"/>
<dbReference type="Proteomes" id="UP000006548">
    <property type="component" value="Chromosome 1"/>
</dbReference>
<dbReference type="ExpressionAtlas" id="Q9SY66">
    <property type="expression patterns" value="baseline and differential"/>
</dbReference>
<dbReference type="GO" id="GO:0005634">
    <property type="term" value="C:nucleus"/>
    <property type="evidence" value="ECO:0007669"/>
    <property type="project" value="UniProtKB-SubCell"/>
</dbReference>
<dbReference type="GO" id="GO:0008270">
    <property type="term" value="F:zinc ion binding"/>
    <property type="evidence" value="ECO:0007669"/>
    <property type="project" value="UniProtKB-KW"/>
</dbReference>
<dbReference type="GO" id="GO:0006355">
    <property type="term" value="P:regulation of DNA-templated transcription"/>
    <property type="evidence" value="ECO:0007669"/>
    <property type="project" value="InterPro"/>
</dbReference>
<dbReference type="InterPro" id="IPR004330">
    <property type="entry name" value="FAR1_DNA_bnd_dom"/>
</dbReference>
<dbReference type="InterPro" id="IPR031052">
    <property type="entry name" value="FHY3/FAR1"/>
</dbReference>
<dbReference type="InterPro" id="IPR018289">
    <property type="entry name" value="MULE_transposase_dom"/>
</dbReference>
<dbReference type="InterPro" id="IPR006564">
    <property type="entry name" value="Znf_PMZ"/>
</dbReference>
<dbReference type="InterPro" id="IPR007527">
    <property type="entry name" value="Znf_SWIM"/>
</dbReference>
<dbReference type="PANTHER" id="PTHR31669">
    <property type="entry name" value="PROTEIN FAR1-RELATED SEQUENCE 10-RELATED"/>
    <property type="match status" value="1"/>
</dbReference>
<dbReference type="PANTHER" id="PTHR31669:SF184">
    <property type="entry name" value="PROTEIN FAR1-RELATED SEQUENCE 11"/>
    <property type="match status" value="1"/>
</dbReference>
<dbReference type="Pfam" id="PF03101">
    <property type="entry name" value="FAR1"/>
    <property type="match status" value="1"/>
</dbReference>
<dbReference type="Pfam" id="PF10551">
    <property type="entry name" value="MULE"/>
    <property type="match status" value="1"/>
</dbReference>
<dbReference type="Pfam" id="PF04434">
    <property type="entry name" value="SWIM"/>
    <property type="match status" value="1"/>
</dbReference>
<dbReference type="SMART" id="SM00575">
    <property type="entry name" value="ZnF_PMZ"/>
    <property type="match status" value="1"/>
</dbReference>
<dbReference type="PROSITE" id="PS50966">
    <property type="entry name" value="ZF_SWIM"/>
    <property type="match status" value="1"/>
</dbReference>
<sequence length="680" mass="77731">MSDDPGQMLLIYDDPSDQRSLSLDDASSTEESPDDNNLSLEAVHNAIPYLGQIFLTHDTAYEFYSTFAKRCGFSIRRHRTEGKDGVGKGLTRRYFVCHRAGNTPIKTLSEGKPQRNRRSSRCGCQAYLRISKLTELGSTEWRVTGFANHHNHELLEPNQVRFLPAYRSISDADKSRILMFSKTGISVQQMMRLLELEKCVEPGFLPFTEKDVRNLLQSFKKLDPEDENIDFLRMCQSIKEKDPNFKFEFTLDANDKLENIAWSYASSIQSYELFGDAVVFDTTHRLSAVEMPLGIWVGVNNYGVPCFFGCVLLRDENLRSWSWALQAFTGFMNGKAPQTILTDHNMCLKEAIAGEMPATKHALCIWMVVGKFPSWFNAGLGERYNDWKAEFYRLYHLESVEEFELGWRDMVNSFGLHTNRHINNLYASRSLWSLPYLRSHFLAGMTLTGRSKAINAFIQRFLSAQTRLAHFVEQVAVVVDFKDQATEQQTMQQNLQNISLKTGAPMESHAASVLTPFAFSKLQEQLVLAAHYASFQMDEGYLVRHHTKLDGGRKVYWVPQEGIISCSCQLFEFSGFLCRHALRVLSTGNCFQVPDRYLPLRWRRISTSFSKTFRSNAEDHGERVQLLQNLVSTLVSESAKSKERLDIATEQTSILLSRIREQPVSSLAIRDISSSVQRNF</sequence>
<feature type="chain" id="PRO_0000363489" description="Protein FAR1-RELATED SEQUENCE 11">
    <location>
        <begin position="1"/>
        <end position="680"/>
    </location>
</feature>
<feature type="domain" description="FAR1">
    <location>
        <begin position="62"/>
        <end position="156"/>
    </location>
</feature>
<feature type="domain" description="MULE">
    <location>
        <begin position="277"/>
        <end position="373"/>
    </location>
</feature>
<feature type="zinc finger region" description="SWIM-type" evidence="1">
    <location>
        <begin position="556"/>
        <end position="589"/>
    </location>
</feature>
<feature type="region of interest" description="Disordered" evidence="2">
    <location>
        <begin position="1"/>
        <end position="36"/>
    </location>
</feature>
<comment type="function">
    <text>Putative transcription activator involved in regulating light control of development.</text>
</comment>
<comment type="interaction">
    <interactant intactId="EBI-4451817">
        <id>Q9SY66</id>
    </interactant>
    <interactant intactId="EBI-15192063">
        <id>Q9STJ9</id>
        <label>SAP10</label>
    </interactant>
    <organismsDiffer>false</organismsDiffer>
    <experiments>3</experiments>
</comment>
<comment type="subcellular location">
    <subcellularLocation>
        <location evidence="3">Nucleus</location>
    </subcellularLocation>
    <text>The nuclear localization is independent of the light treatment.</text>
</comment>
<comment type="tissue specificity">
    <text evidence="3">Expressed in hypocotyls, rosette and cauline leaves, inflorescences stems, flowers and siliques.</text>
</comment>
<comment type="induction">
    <text evidence="3">Up-regulated in hypocotyls by far-red light treatment.</text>
</comment>
<comment type="similarity">
    <text evidence="4">Belongs to the FHY3/FAR1 family.</text>
</comment>
<gene>
    <name type="primary">FRS11</name>
    <name type="ordered locus">At1g10240</name>
    <name type="ORF">F14N23.12</name>
</gene>